<reference key="1">
    <citation type="journal article" date="2000" name="Nature">
        <title>Complete genome sequence of Pseudomonas aeruginosa PAO1, an opportunistic pathogen.</title>
        <authorList>
            <person name="Stover C.K."/>
            <person name="Pham X.-Q.T."/>
            <person name="Erwin A.L."/>
            <person name="Mizoguchi S.D."/>
            <person name="Warrener P."/>
            <person name="Hickey M.J."/>
            <person name="Brinkman F.S.L."/>
            <person name="Hufnagle W.O."/>
            <person name="Kowalik D.J."/>
            <person name="Lagrou M."/>
            <person name="Garber R.L."/>
            <person name="Goltry L."/>
            <person name="Tolentino E."/>
            <person name="Westbrock-Wadman S."/>
            <person name="Yuan Y."/>
            <person name="Brody L.L."/>
            <person name="Coulter S.N."/>
            <person name="Folger K.R."/>
            <person name="Kas A."/>
            <person name="Larbig K."/>
            <person name="Lim R.M."/>
            <person name="Smith K.A."/>
            <person name="Spencer D.H."/>
            <person name="Wong G.K.-S."/>
            <person name="Wu Z."/>
            <person name="Paulsen I.T."/>
            <person name="Reizer J."/>
            <person name="Saier M.H. Jr."/>
            <person name="Hancock R.E.W."/>
            <person name="Lory S."/>
            <person name="Olson M.V."/>
        </authorList>
    </citation>
    <scope>NUCLEOTIDE SEQUENCE [LARGE SCALE GENOMIC DNA]</scope>
    <source>
        <strain>ATCC 15692 / DSM 22644 / CIP 104116 / JCM 14847 / LMG 12228 / 1C / PRS 101 / PAO1</strain>
    </source>
</reference>
<reference key="2">
    <citation type="submission" date="1998-04" db="EMBL/GenBank/DDBJ databases">
        <authorList>
            <person name="Hindle Z."/>
            <person name="Throup J.P."/>
            <person name="Francis K.P."/>
            <person name="Bycroft B.W."/>
            <person name="Williams P."/>
            <person name="Stewart G.S.A.B."/>
        </authorList>
    </citation>
    <scope>NUCLEOTIDE SEQUENCE [GENOMIC DNA] OF 198-412</scope>
    <source>
        <strain>ATCC 15692 / DSM 22644 / CIP 104116 / JCM 14847 / LMG 12228 / 1C / PRS 101 / PAO1</strain>
    </source>
</reference>
<reference key="3">
    <citation type="submission" date="2017-09" db="PDB data bank">
        <title>Structural of Pseudomonas aeruginosa Lysc.</title>
        <authorList>
            <person name="Li C."/>
            <person name="Yang M."/>
            <person name="Bao R."/>
        </authorList>
    </citation>
    <scope>X-RAY CRYSTALLOGRAPHY (2.30 ANGSTROMS) OF 1-412</scope>
</reference>
<organism>
    <name type="scientific">Pseudomonas aeruginosa (strain ATCC 15692 / DSM 22644 / CIP 104116 / JCM 14847 / LMG 12228 / 1C / PRS 101 / PAO1)</name>
    <dbReference type="NCBI Taxonomy" id="208964"/>
    <lineage>
        <taxon>Bacteria</taxon>
        <taxon>Pseudomonadati</taxon>
        <taxon>Pseudomonadota</taxon>
        <taxon>Gammaproteobacteria</taxon>
        <taxon>Pseudomonadales</taxon>
        <taxon>Pseudomonadaceae</taxon>
        <taxon>Pseudomonas</taxon>
    </lineage>
</organism>
<protein>
    <recommendedName>
        <fullName>Aspartokinase</fullName>
        <ecNumber>2.7.2.4</ecNumber>
    </recommendedName>
    <alternativeName>
        <fullName>Aspartate kinase</fullName>
    </alternativeName>
</protein>
<name>AK_PSEAE</name>
<comment type="catalytic activity">
    <reaction>
        <text>L-aspartate + ATP = 4-phospho-L-aspartate + ADP</text>
        <dbReference type="Rhea" id="RHEA:23776"/>
        <dbReference type="ChEBI" id="CHEBI:29991"/>
        <dbReference type="ChEBI" id="CHEBI:30616"/>
        <dbReference type="ChEBI" id="CHEBI:57535"/>
        <dbReference type="ChEBI" id="CHEBI:456216"/>
        <dbReference type="EC" id="2.7.2.4"/>
    </reaction>
</comment>
<comment type="pathway">
    <text>Amino-acid biosynthesis; L-lysine biosynthesis via DAP pathway; (S)-tetrahydrodipicolinate from L-aspartate: step 1/4.</text>
</comment>
<comment type="pathway">
    <text>Amino-acid biosynthesis; L-methionine biosynthesis via de novo pathway; L-homoserine from L-aspartate: step 1/3.</text>
</comment>
<comment type="pathway">
    <text>Amino-acid biosynthesis; L-threonine biosynthesis; L-threonine from L-aspartate: step 1/5.</text>
</comment>
<comment type="similarity">
    <text evidence="2">Belongs to the aspartokinase family.</text>
</comment>
<proteinExistence type="evidence at protein level"/>
<sequence length="412" mass="44389">MALIVQKFGGTSVGTVERIEQVAEKVKKFREAGDDVVVVVSAMSGETNRLIGLANQIMEQPVPRELDVMVSTGEQVTIALLSMALIKRGVPAVSYTGNQVRILTDSAHTKARILHIDDTHIRADLKAGRVVVVAGFQGVDGNGNITTLGRGGSDTTGVALAAALKADECQIYTDVDGVYTTDPRVVPQARRLDKITFEEMLEMASLGSKVLQIRAVEFAGKYNVPLRVLHSFQEGPGTLITIDDEEESMEQPIISGIAFNRDEAKLTIRGVPDTPGVAFKILGPISAANVEVDMIVQNVAHDNTTDFTFTVHRNDYLNALEILKQTAANIGAREAIGDTNIAKVSIVGVGMRSHAGVASRMFEALAKESINIQMISTSEIKVSVVIEEKYLELAVRALHTAFELDAPARQGE</sequence>
<dbReference type="EC" id="2.7.2.4"/>
<dbReference type="EMBL" id="AE004091">
    <property type="protein sequence ID" value="AAG04293.1"/>
    <property type="molecule type" value="Genomic_DNA"/>
</dbReference>
<dbReference type="EMBL" id="AF061757">
    <property type="protein sequence ID" value="AAC16241.1"/>
    <property type="molecule type" value="Genomic_DNA"/>
</dbReference>
<dbReference type="PIR" id="C83531">
    <property type="entry name" value="C83531"/>
</dbReference>
<dbReference type="RefSeq" id="NP_249595.1">
    <property type="nucleotide sequence ID" value="NC_002516.2"/>
</dbReference>
<dbReference type="RefSeq" id="WP_003085971.1">
    <property type="nucleotide sequence ID" value="NZ_QZGE01000007.1"/>
</dbReference>
<dbReference type="PDB" id="5YEI">
    <property type="method" value="X-ray"/>
    <property type="resolution" value="2.30 A"/>
    <property type="chains" value="A/C/E/G=1-412, B/D/F/H=249-412"/>
</dbReference>
<dbReference type="PDBsum" id="5YEI"/>
<dbReference type="SMR" id="O69077"/>
<dbReference type="FunCoup" id="O69077">
    <property type="interactions" value="696"/>
</dbReference>
<dbReference type="STRING" id="208964.PA0904"/>
<dbReference type="PaxDb" id="208964-PA0904"/>
<dbReference type="GeneID" id="878315"/>
<dbReference type="KEGG" id="pae:PA0904"/>
<dbReference type="PATRIC" id="fig|208964.12.peg.939"/>
<dbReference type="PseudoCAP" id="PA0904"/>
<dbReference type="HOGENOM" id="CLU_009116_3_2_6"/>
<dbReference type="InParanoid" id="O69077"/>
<dbReference type="OrthoDB" id="9799110at2"/>
<dbReference type="PhylomeDB" id="O69077"/>
<dbReference type="BioCyc" id="PAER208964:G1FZ6-920-MONOMER"/>
<dbReference type="BRENDA" id="2.7.2.4">
    <property type="organism ID" value="5087"/>
</dbReference>
<dbReference type="UniPathway" id="UPA00034">
    <property type="reaction ID" value="UER00015"/>
</dbReference>
<dbReference type="UniPathway" id="UPA00050">
    <property type="reaction ID" value="UER00461"/>
</dbReference>
<dbReference type="UniPathway" id="UPA00051">
    <property type="reaction ID" value="UER00462"/>
</dbReference>
<dbReference type="Proteomes" id="UP000002438">
    <property type="component" value="Chromosome"/>
</dbReference>
<dbReference type="GO" id="GO:0005829">
    <property type="term" value="C:cytosol"/>
    <property type="evidence" value="ECO:0000318"/>
    <property type="project" value="GO_Central"/>
</dbReference>
<dbReference type="GO" id="GO:0004072">
    <property type="term" value="F:aspartate kinase activity"/>
    <property type="evidence" value="ECO:0000318"/>
    <property type="project" value="GO_Central"/>
</dbReference>
<dbReference type="GO" id="GO:0005524">
    <property type="term" value="F:ATP binding"/>
    <property type="evidence" value="ECO:0007669"/>
    <property type="project" value="UniProtKB-KW"/>
</dbReference>
<dbReference type="GO" id="GO:0019877">
    <property type="term" value="P:diaminopimelate biosynthetic process"/>
    <property type="evidence" value="ECO:0007669"/>
    <property type="project" value="UniProtKB-KW"/>
</dbReference>
<dbReference type="GO" id="GO:0009090">
    <property type="term" value="P:homoserine biosynthetic process"/>
    <property type="evidence" value="ECO:0000318"/>
    <property type="project" value="GO_Central"/>
</dbReference>
<dbReference type="GO" id="GO:0009089">
    <property type="term" value="P:lysine biosynthetic process via diaminopimelate"/>
    <property type="evidence" value="ECO:0000318"/>
    <property type="project" value="GO_Central"/>
</dbReference>
<dbReference type="GO" id="GO:0009088">
    <property type="term" value="P:threonine biosynthetic process"/>
    <property type="evidence" value="ECO:0007669"/>
    <property type="project" value="UniProtKB-UniPathway"/>
</dbReference>
<dbReference type="CDD" id="cd04261">
    <property type="entry name" value="AAK_AKii-LysC-BS"/>
    <property type="match status" value="1"/>
</dbReference>
<dbReference type="CDD" id="cd04923">
    <property type="entry name" value="ACT_AK-LysC-DapG-like_2"/>
    <property type="match status" value="1"/>
</dbReference>
<dbReference type="CDD" id="cd04913">
    <property type="entry name" value="ACT_AKii-LysC-BS-like_1"/>
    <property type="match status" value="1"/>
</dbReference>
<dbReference type="FunFam" id="3.30.2130.10:FF:000002">
    <property type="entry name" value="Aspartokinase"/>
    <property type="match status" value="1"/>
</dbReference>
<dbReference type="FunFam" id="3.40.1160.10:FF:000002">
    <property type="entry name" value="Aspartokinase"/>
    <property type="match status" value="1"/>
</dbReference>
<dbReference type="Gene3D" id="3.40.1160.10">
    <property type="entry name" value="Acetylglutamate kinase-like"/>
    <property type="match status" value="1"/>
</dbReference>
<dbReference type="Gene3D" id="3.30.2130.10">
    <property type="entry name" value="VC0802-like"/>
    <property type="match status" value="1"/>
</dbReference>
<dbReference type="InterPro" id="IPR036393">
    <property type="entry name" value="AceGlu_kinase-like_sf"/>
</dbReference>
<dbReference type="InterPro" id="IPR045865">
    <property type="entry name" value="ACT-like_dom_sf"/>
</dbReference>
<dbReference type="InterPro" id="IPR054352">
    <property type="entry name" value="ACT_Aspartokinase"/>
</dbReference>
<dbReference type="InterPro" id="IPR002912">
    <property type="entry name" value="ACT_dom"/>
</dbReference>
<dbReference type="InterPro" id="IPR041740">
    <property type="entry name" value="AKii-LysC-BS"/>
</dbReference>
<dbReference type="InterPro" id="IPR001048">
    <property type="entry name" value="Asp/Glu/Uridylate_kinase"/>
</dbReference>
<dbReference type="InterPro" id="IPR005260">
    <property type="entry name" value="Asp_kin_monofn"/>
</dbReference>
<dbReference type="InterPro" id="IPR001341">
    <property type="entry name" value="Asp_kinase"/>
</dbReference>
<dbReference type="InterPro" id="IPR018042">
    <property type="entry name" value="Aspartate_kinase_CS"/>
</dbReference>
<dbReference type="NCBIfam" id="TIGR00656">
    <property type="entry name" value="asp_kin_monofn"/>
    <property type="match status" value="1"/>
</dbReference>
<dbReference type="NCBIfam" id="TIGR00657">
    <property type="entry name" value="asp_kinases"/>
    <property type="match status" value="1"/>
</dbReference>
<dbReference type="NCBIfam" id="NF005154">
    <property type="entry name" value="PRK06635.1-2"/>
    <property type="match status" value="1"/>
</dbReference>
<dbReference type="NCBIfam" id="NF005155">
    <property type="entry name" value="PRK06635.1-4"/>
    <property type="match status" value="1"/>
</dbReference>
<dbReference type="PANTHER" id="PTHR21499">
    <property type="entry name" value="ASPARTATE KINASE"/>
    <property type="match status" value="1"/>
</dbReference>
<dbReference type="PANTHER" id="PTHR21499:SF3">
    <property type="entry name" value="ASPARTOKINASE"/>
    <property type="match status" value="1"/>
</dbReference>
<dbReference type="Pfam" id="PF00696">
    <property type="entry name" value="AA_kinase"/>
    <property type="match status" value="1"/>
</dbReference>
<dbReference type="Pfam" id="PF01842">
    <property type="entry name" value="ACT"/>
    <property type="match status" value="1"/>
</dbReference>
<dbReference type="Pfam" id="PF22468">
    <property type="entry name" value="ACT_9"/>
    <property type="match status" value="1"/>
</dbReference>
<dbReference type="PIRSF" id="PIRSF000726">
    <property type="entry name" value="Asp_kin"/>
    <property type="match status" value="1"/>
</dbReference>
<dbReference type="SUPFAM" id="SSF55021">
    <property type="entry name" value="ACT-like"/>
    <property type="match status" value="2"/>
</dbReference>
<dbReference type="SUPFAM" id="SSF53633">
    <property type="entry name" value="Carbamate kinase-like"/>
    <property type="match status" value="1"/>
</dbReference>
<dbReference type="PROSITE" id="PS51671">
    <property type="entry name" value="ACT"/>
    <property type="match status" value="2"/>
</dbReference>
<dbReference type="PROSITE" id="PS00324">
    <property type="entry name" value="ASPARTOKINASE"/>
    <property type="match status" value="1"/>
</dbReference>
<keyword id="KW-0002">3D-structure</keyword>
<keyword id="KW-0028">Amino-acid biosynthesis</keyword>
<keyword id="KW-0067">ATP-binding</keyword>
<keyword id="KW-0220">Diaminopimelate biosynthesis</keyword>
<keyword id="KW-0418">Kinase</keyword>
<keyword id="KW-0457">Lysine biosynthesis</keyword>
<keyword id="KW-0547">Nucleotide-binding</keyword>
<keyword id="KW-1185">Reference proteome</keyword>
<keyword id="KW-0677">Repeat</keyword>
<keyword id="KW-0808">Transferase</keyword>
<gene>
    <name type="primary">lysC</name>
    <name type="ordered locus">PA0904</name>
</gene>
<evidence type="ECO:0000255" key="1">
    <source>
        <dbReference type="PROSITE-ProRule" id="PRU01007"/>
    </source>
</evidence>
<evidence type="ECO:0000305" key="2"/>
<evidence type="ECO:0007829" key="3">
    <source>
        <dbReference type="PDB" id="5YEI"/>
    </source>
</evidence>
<accession>O69077</accession>
<accession>Q9I552</accession>
<feature type="chain" id="PRO_0000066679" description="Aspartokinase">
    <location>
        <begin position="1"/>
        <end position="412"/>
    </location>
</feature>
<feature type="domain" description="ACT 1" evidence="1">
    <location>
        <begin position="266"/>
        <end position="340"/>
    </location>
</feature>
<feature type="domain" description="ACT 2" evidence="1">
    <location>
        <begin position="346"/>
        <end position="412"/>
    </location>
</feature>
<feature type="strand" evidence="3">
    <location>
        <begin position="3"/>
        <end position="8"/>
    </location>
</feature>
<feature type="turn" evidence="3">
    <location>
        <begin position="10"/>
        <end position="13"/>
    </location>
</feature>
<feature type="helix" evidence="3">
    <location>
        <begin position="16"/>
        <end position="31"/>
    </location>
</feature>
<feature type="strand" evidence="3">
    <location>
        <begin position="35"/>
        <end position="40"/>
    </location>
</feature>
<feature type="helix" evidence="3">
    <location>
        <begin position="46"/>
        <end position="55"/>
    </location>
</feature>
<feature type="helix" evidence="3">
    <location>
        <begin position="63"/>
        <end position="70"/>
    </location>
</feature>
<feature type="helix" evidence="3">
    <location>
        <begin position="72"/>
        <end position="87"/>
    </location>
</feature>
<feature type="strand" evidence="3">
    <location>
        <begin position="92"/>
        <end position="95"/>
    </location>
</feature>
<feature type="helix" evidence="3">
    <location>
        <begin position="97"/>
        <end position="100"/>
    </location>
</feature>
<feature type="strand" evidence="3">
    <location>
        <begin position="102"/>
        <end position="104"/>
    </location>
</feature>
<feature type="strand" evidence="3">
    <location>
        <begin position="113"/>
        <end position="116"/>
    </location>
</feature>
<feature type="helix" evidence="3">
    <location>
        <begin position="119"/>
        <end position="126"/>
    </location>
</feature>
<feature type="strand" evidence="3">
    <location>
        <begin position="130"/>
        <end position="134"/>
    </location>
</feature>
<feature type="strand" evidence="3">
    <location>
        <begin position="137"/>
        <end position="139"/>
    </location>
</feature>
<feature type="strand" evidence="3">
    <location>
        <begin position="145"/>
        <end position="147"/>
    </location>
</feature>
<feature type="helix" evidence="3">
    <location>
        <begin position="152"/>
        <end position="163"/>
    </location>
</feature>
<feature type="strand" evidence="3">
    <location>
        <begin position="167"/>
        <end position="177"/>
    </location>
</feature>
<feature type="strand" evidence="3">
    <location>
        <begin position="179"/>
        <end position="181"/>
    </location>
</feature>
<feature type="turn" evidence="3">
    <location>
        <begin position="183"/>
        <end position="185"/>
    </location>
</feature>
<feature type="strand" evidence="3">
    <location>
        <begin position="193"/>
        <end position="196"/>
    </location>
</feature>
<feature type="helix" evidence="3">
    <location>
        <begin position="197"/>
        <end position="202"/>
    </location>
</feature>
<feature type="helix" evidence="3">
    <location>
        <begin position="204"/>
        <end position="206"/>
    </location>
</feature>
<feature type="strand" evidence="3">
    <location>
        <begin position="209"/>
        <end position="211"/>
    </location>
</feature>
<feature type="helix" evidence="3">
    <location>
        <begin position="213"/>
        <end position="221"/>
    </location>
</feature>
<feature type="strand" evidence="3">
    <location>
        <begin position="226"/>
        <end position="230"/>
    </location>
</feature>
<feature type="strand" evidence="3">
    <location>
        <begin position="238"/>
        <end position="241"/>
    </location>
</feature>
<feature type="strand" evidence="3">
    <location>
        <begin position="253"/>
        <end position="261"/>
    </location>
</feature>
<feature type="strand" evidence="3">
    <location>
        <begin position="264"/>
        <end position="272"/>
    </location>
</feature>
<feature type="helix" evidence="3">
    <location>
        <begin position="277"/>
        <end position="287"/>
    </location>
</feature>
<feature type="strand" evidence="3">
    <location>
        <begin position="295"/>
        <end position="297"/>
    </location>
</feature>
<feature type="strand" evidence="3">
    <location>
        <begin position="304"/>
        <end position="311"/>
    </location>
</feature>
<feature type="helix" evidence="3">
    <location>
        <begin position="313"/>
        <end position="315"/>
    </location>
</feature>
<feature type="helix" evidence="3">
    <location>
        <begin position="316"/>
        <end position="329"/>
    </location>
</feature>
<feature type="strand" evidence="3">
    <location>
        <begin position="333"/>
        <end position="338"/>
    </location>
</feature>
<feature type="strand" evidence="3">
    <location>
        <begin position="340"/>
        <end position="348"/>
    </location>
</feature>
<feature type="helix" evidence="3">
    <location>
        <begin position="351"/>
        <end position="353"/>
    </location>
</feature>
<feature type="helix" evidence="3">
    <location>
        <begin position="354"/>
        <end position="367"/>
    </location>
</feature>
<feature type="strand" evidence="3">
    <location>
        <begin position="374"/>
        <end position="377"/>
    </location>
</feature>
<feature type="strand" evidence="3">
    <location>
        <begin position="379"/>
        <end position="387"/>
    </location>
</feature>
<feature type="helix" evidence="3">
    <location>
        <begin position="388"/>
        <end position="390"/>
    </location>
</feature>
<feature type="helix" evidence="3">
    <location>
        <begin position="391"/>
        <end position="401"/>
    </location>
</feature>
<feature type="strand" evidence="3">
    <location>
        <begin position="402"/>
        <end position="404"/>
    </location>
</feature>